<organism>
    <name type="scientific">Streptococcus gordonii (strain Challis / ATCC 35105 / BCRC 15272 / CH1 / DL1 / V288)</name>
    <dbReference type="NCBI Taxonomy" id="467705"/>
    <lineage>
        <taxon>Bacteria</taxon>
        <taxon>Bacillati</taxon>
        <taxon>Bacillota</taxon>
        <taxon>Bacilli</taxon>
        <taxon>Lactobacillales</taxon>
        <taxon>Streptococcaceae</taxon>
        <taxon>Streptococcus</taxon>
    </lineage>
</organism>
<sequence length="162" mass="18212">MRRCSLIATIVELVTAVIEPAITAPFELVDVEYGKIGSDYVLSVFVDKPEGITVNDTADLTDIISPLLDTIKPDPFPEQYFLEVTSPGLERPLKTKEQVEAAVGQYIHVGLYKSLDKQKVFEGTLLQFKEDVLTLEYMDKTRKKEIDIPYSLVSKARLAVKF</sequence>
<proteinExistence type="inferred from homology"/>
<keyword id="KW-0963">Cytoplasm</keyword>
<keyword id="KW-1185">Reference proteome</keyword>
<keyword id="KW-0690">Ribosome biogenesis</keyword>
<reference key="1">
    <citation type="journal article" date="2007" name="J. Bacteriol.">
        <title>Genome-wide transcriptional changes in Streptococcus gordonii in response to competence signaling peptide.</title>
        <authorList>
            <person name="Vickerman M.M."/>
            <person name="Iobst S."/>
            <person name="Jesionowski A.M."/>
            <person name="Gill S.R."/>
        </authorList>
    </citation>
    <scope>NUCLEOTIDE SEQUENCE [LARGE SCALE GENOMIC DNA]</scope>
    <source>
        <strain>Challis / ATCC 35105 / BCRC 15272 / CH1 / DL1 / V288</strain>
    </source>
</reference>
<protein>
    <recommendedName>
        <fullName evidence="1">Ribosome maturation factor RimP</fullName>
    </recommendedName>
</protein>
<comment type="function">
    <text evidence="1">Required for maturation of 30S ribosomal subunits.</text>
</comment>
<comment type="subcellular location">
    <subcellularLocation>
        <location evidence="1">Cytoplasm</location>
    </subcellularLocation>
</comment>
<comment type="similarity">
    <text evidence="1">Belongs to the RimP family.</text>
</comment>
<name>RIMP_STRGC</name>
<evidence type="ECO:0000255" key="1">
    <source>
        <dbReference type="HAMAP-Rule" id="MF_01077"/>
    </source>
</evidence>
<dbReference type="EMBL" id="CP000725">
    <property type="protein sequence ID" value="ABV10710.1"/>
    <property type="molecule type" value="Genomic_DNA"/>
</dbReference>
<dbReference type="RefSeq" id="WP_012000044.1">
    <property type="nucleotide sequence ID" value="NC_009785.1"/>
</dbReference>
<dbReference type="SMR" id="A8AVP8"/>
<dbReference type="STRING" id="467705.SGO_0542"/>
<dbReference type="GeneID" id="93788303"/>
<dbReference type="KEGG" id="sgo:SGO_0542"/>
<dbReference type="eggNOG" id="COG0779">
    <property type="taxonomic scope" value="Bacteria"/>
</dbReference>
<dbReference type="HOGENOM" id="CLU_070525_2_0_9"/>
<dbReference type="Proteomes" id="UP000001131">
    <property type="component" value="Chromosome"/>
</dbReference>
<dbReference type="GO" id="GO:0005829">
    <property type="term" value="C:cytosol"/>
    <property type="evidence" value="ECO:0007669"/>
    <property type="project" value="TreeGrafter"/>
</dbReference>
<dbReference type="GO" id="GO:0000028">
    <property type="term" value="P:ribosomal small subunit assembly"/>
    <property type="evidence" value="ECO:0007669"/>
    <property type="project" value="TreeGrafter"/>
</dbReference>
<dbReference type="GO" id="GO:0006412">
    <property type="term" value="P:translation"/>
    <property type="evidence" value="ECO:0007669"/>
    <property type="project" value="TreeGrafter"/>
</dbReference>
<dbReference type="CDD" id="cd01734">
    <property type="entry name" value="YlxS_C"/>
    <property type="match status" value="1"/>
</dbReference>
<dbReference type="Gene3D" id="2.30.30.180">
    <property type="entry name" value="Ribosome maturation factor RimP, C-terminal domain"/>
    <property type="match status" value="1"/>
</dbReference>
<dbReference type="Gene3D" id="3.30.300.70">
    <property type="entry name" value="RimP-like superfamily, N-terminal"/>
    <property type="match status" value="1"/>
</dbReference>
<dbReference type="HAMAP" id="MF_01077">
    <property type="entry name" value="RimP"/>
    <property type="match status" value="1"/>
</dbReference>
<dbReference type="InterPro" id="IPR003728">
    <property type="entry name" value="Ribosome_maturation_RimP"/>
</dbReference>
<dbReference type="InterPro" id="IPR028998">
    <property type="entry name" value="RimP_C"/>
</dbReference>
<dbReference type="InterPro" id="IPR036847">
    <property type="entry name" value="RimP_C_sf"/>
</dbReference>
<dbReference type="InterPro" id="IPR028989">
    <property type="entry name" value="RimP_N"/>
</dbReference>
<dbReference type="InterPro" id="IPR035956">
    <property type="entry name" value="RimP_N_sf"/>
</dbReference>
<dbReference type="NCBIfam" id="NF000928">
    <property type="entry name" value="PRK00092.1-2"/>
    <property type="match status" value="1"/>
</dbReference>
<dbReference type="PANTHER" id="PTHR33867">
    <property type="entry name" value="RIBOSOME MATURATION FACTOR RIMP"/>
    <property type="match status" value="1"/>
</dbReference>
<dbReference type="PANTHER" id="PTHR33867:SF1">
    <property type="entry name" value="RIBOSOME MATURATION FACTOR RIMP"/>
    <property type="match status" value="1"/>
</dbReference>
<dbReference type="Pfam" id="PF17384">
    <property type="entry name" value="DUF150_C"/>
    <property type="match status" value="1"/>
</dbReference>
<dbReference type="Pfam" id="PF02576">
    <property type="entry name" value="RimP_N"/>
    <property type="match status" value="1"/>
</dbReference>
<dbReference type="SUPFAM" id="SSF74942">
    <property type="entry name" value="YhbC-like, C-terminal domain"/>
    <property type="match status" value="1"/>
</dbReference>
<dbReference type="SUPFAM" id="SSF75420">
    <property type="entry name" value="YhbC-like, N-terminal domain"/>
    <property type="match status" value="1"/>
</dbReference>
<gene>
    <name evidence="1" type="primary">rimP</name>
    <name type="ordered locus">SGO_0542</name>
</gene>
<accession>A8AVP8</accession>
<feature type="chain" id="PRO_0000384781" description="Ribosome maturation factor RimP">
    <location>
        <begin position="1"/>
        <end position="162"/>
    </location>
</feature>